<organism>
    <name type="scientific">Bacillus cereus (strain AH187)</name>
    <dbReference type="NCBI Taxonomy" id="405534"/>
    <lineage>
        <taxon>Bacteria</taxon>
        <taxon>Bacillati</taxon>
        <taxon>Bacillota</taxon>
        <taxon>Bacilli</taxon>
        <taxon>Bacillales</taxon>
        <taxon>Bacillaceae</taxon>
        <taxon>Bacillus</taxon>
        <taxon>Bacillus cereus group</taxon>
    </lineage>
</organism>
<accession>B7HNU5</accession>
<gene>
    <name evidence="1" type="primary">nusB</name>
    <name type="ordered locus">BCAH187_A4312</name>
</gene>
<dbReference type="EMBL" id="CP001177">
    <property type="protein sequence ID" value="ACJ82157.1"/>
    <property type="molecule type" value="Genomic_DNA"/>
</dbReference>
<dbReference type="SMR" id="B7HNU5"/>
<dbReference type="KEGG" id="bcr:BCAH187_A4312"/>
<dbReference type="HOGENOM" id="CLU_087843_3_3_9"/>
<dbReference type="Proteomes" id="UP000002214">
    <property type="component" value="Chromosome"/>
</dbReference>
<dbReference type="GO" id="GO:0005829">
    <property type="term" value="C:cytosol"/>
    <property type="evidence" value="ECO:0007669"/>
    <property type="project" value="TreeGrafter"/>
</dbReference>
<dbReference type="GO" id="GO:0003723">
    <property type="term" value="F:RNA binding"/>
    <property type="evidence" value="ECO:0007669"/>
    <property type="project" value="UniProtKB-UniRule"/>
</dbReference>
<dbReference type="GO" id="GO:0006353">
    <property type="term" value="P:DNA-templated transcription termination"/>
    <property type="evidence" value="ECO:0007669"/>
    <property type="project" value="UniProtKB-UniRule"/>
</dbReference>
<dbReference type="GO" id="GO:0031564">
    <property type="term" value="P:transcription antitermination"/>
    <property type="evidence" value="ECO:0007669"/>
    <property type="project" value="UniProtKB-KW"/>
</dbReference>
<dbReference type="CDD" id="cd00619">
    <property type="entry name" value="Terminator_NusB"/>
    <property type="match status" value="1"/>
</dbReference>
<dbReference type="FunFam" id="1.10.940.10:FF:000003">
    <property type="entry name" value="Transcription antitermination factor NusB"/>
    <property type="match status" value="1"/>
</dbReference>
<dbReference type="Gene3D" id="1.10.940.10">
    <property type="entry name" value="NusB-like"/>
    <property type="match status" value="1"/>
</dbReference>
<dbReference type="HAMAP" id="MF_00073">
    <property type="entry name" value="NusB"/>
    <property type="match status" value="1"/>
</dbReference>
<dbReference type="InterPro" id="IPR035926">
    <property type="entry name" value="NusB-like_sf"/>
</dbReference>
<dbReference type="InterPro" id="IPR011605">
    <property type="entry name" value="NusB_fam"/>
</dbReference>
<dbReference type="InterPro" id="IPR006027">
    <property type="entry name" value="NusB_RsmB_TIM44"/>
</dbReference>
<dbReference type="NCBIfam" id="TIGR01951">
    <property type="entry name" value="nusB"/>
    <property type="match status" value="1"/>
</dbReference>
<dbReference type="NCBIfam" id="NF001223">
    <property type="entry name" value="PRK00202.1-1"/>
    <property type="match status" value="1"/>
</dbReference>
<dbReference type="PANTHER" id="PTHR11078:SF3">
    <property type="entry name" value="ANTITERMINATION NUSB DOMAIN-CONTAINING PROTEIN"/>
    <property type="match status" value="1"/>
</dbReference>
<dbReference type="PANTHER" id="PTHR11078">
    <property type="entry name" value="N UTILIZATION SUBSTANCE PROTEIN B-RELATED"/>
    <property type="match status" value="1"/>
</dbReference>
<dbReference type="Pfam" id="PF01029">
    <property type="entry name" value="NusB"/>
    <property type="match status" value="1"/>
</dbReference>
<dbReference type="SUPFAM" id="SSF48013">
    <property type="entry name" value="NusB-like"/>
    <property type="match status" value="1"/>
</dbReference>
<feature type="chain" id="PRO_1000117045" description="Transcription antitermination protein NusB">
    <location>
        <begin position="1"/>
        <end position="130"/>
    </location>
</feature>
<sequence length="130" mass="15132">MKRRTARERAMQALYQMDITGELEPKVAVENTLDEGEETNEFLESLVVGFVENKEVIDEAIRQNLKKWKLERISIVDRSILRVAVYEMKYMEEIPHNVTINEAIEIAKTFGDEESRRFINGVLSNIKDTL</sequence>
<reference key="1">
    <citation type="submission" date="2008-10" db="EMBL/GenBank/DDBJ databases">
        <title>Genome sequence of Bacillus cereus AH187.</title>
        <authorList>
            <person name="Dodson R.J."/>
            <person name="Durkin A.S."/>
            <person name="Rosovitz M.J."/>
            <person name="Rasko D.A."/>
            <person name="Kolsto A.B."/>
            <person name="Okstad O.A."/>
            <person name="Ravel J."/>
            <person name="Sutton G."/>
        </authorList>
    </citation>
    <scope>NUCLEOTIDE SEQUENCE [LARGE SCALE GENOMIC DNA]</scope>
    <source>
        <strain>AH187</strain>
    </source>
</reference>
<proteinExistence type="inferred from homology"/>
<name>NUSB_BACC7</name>
<evidence type="ECO:0000255" key="1">
    <source>
        <dbReference type="HAMAP-Rule" id="MF_00073"/>
    </source>
</evidence>
<comment type="function">
    <text evidence="1">Involved in transcription antitermination. Required for transcription of ribosomal RNA (rRNA) genes. Binds specifically to the boxA antiterminator sequence of the ribosomal RNA (rrn) operons.</text>
</comment>
<comment type="similarity">
    <text evidence="1">Belongs to the NusB family.</text>
</comment>
<protein>
    <recommendedName>
        <fullName evidence="1">Transcription antitermination protein NusB</fullName>
    </recommendedName>
    <alternativeName>
        <fullName evidence="1">Antitermination factor NusB</fullName>
    </alternativeName>
</protein>
<keyword id="KW-0694">RNA-binding</keyword>
<keyword id="KW-0804">Transcription</keyword>
<keyword id="KW-0889">Transcription antitermination</keyword>
<keyword id="KW-0805">Transcription regulation</keyword>